<proteinExistence type="inferred from homology"/>
<comment type="function">
    <text evidence="1">CRISPR (clustered regularly interspaced short palindromic repeat) is an adaptive immune system that provides protection against mobile genetic elements (viruses, transposable elements and conjugative plasmids). CRISPR clusters contain sequences complementary to antecedent mobile elements and target invading nucleic acids. CRISPR clusters are transcribed and processed into CRISPR RNA (crRNA). This may be a 5' to 3' ssDNA exonuclease (By similarity).</text>
</comment>
<comment type="catalytic activity">
    <reaction evidence="1">
        <text>exonucleolytic cleavage in the 5'- to 3'-direction to yield nucleoside 3'-phosphates.</text>
        <dbReference type="EC" id="3.1.12.1"/>
    </reaction>
</comment>
<comment type="cofactor">
    <cofactor evidence="1">
        <name>Mg(2+)</name>
        <dbReference type="ChEBI" id="CHEBI:18420"/>
    </cofactor>
    <cofactor evidence="1">
        <name>Mn(2+)</name>
        <dbReference type="ChEBI" id="CHEBI:29035"/>
    </cofactor>
    <cofactor evidence="1">
        <name>Cu(2+)</name>
        <dbReference type="ChEBI" id="CHEBI:29036"/>
    </cofactor>
    <text evidence="1">Mg(2+) or Mn(2+) required for ssDNA cleavage activity. Can also utilise Cu(2+).</text>
</comment>
<comment type="cofactor">
    <cofactor evidence="1">
        <name>[4Fe-4S] cluster</name>
        <dbReference type="ChEBI" id="CHEBI:49883"/>
    </cofactor>
    <text evidence="1">Binds 1 [4Fe-4S] cluster per subunit. It may be important for protein stability, since mutation of the Cys that bind the cofactor leads to a colorless, insoluble protein.</text>
</comment>
<comment type="similarity">
    <text evidence="2">Belongs to the CRISPR-associated exonuclease Cas4 family.</text>
</comment>
<dbReference type="EC" id="3.1.12.1" evidence="1"/>
<dbReference type="EMBL" id="CP000230">
    <property type="protein sequence ID" value="ABC23143.1"/>
    <property type="molecule type" value="Genomic_DNA"/>
</dbReference>
<dbReference type="RefSeq" id="YP_427430.1">
    <property type="nucleotide sequence ID" value="NC_007643.1"/>
</dbReference>
<dbReference type="SMR" id="Q2RRV2"/>
<dbReference type="STRING" id="269796.Rru_A2343"/>
<dbReference type="EnsemblBacteria" id="ABC23143">
    <property type="protein sequence ID" value="ABC23143"/>
    <property type="gene ID" value="Rru_A2343"/>
</dbReference>
<dbReference type="KEGG" id="rru:Rru_A2343"/>
<dbReference type="PATRIC" id="fig|269796.9.peg.2445"/>
<dbReference type="eggNOG" id="COG1468">
    <property type="taxonomic scope" value="Bacteria"/>
</dbReference>
<dbReference type="HOGENOM" id="CLU_833874_0_0_5"/>
<dbReference type="PhylomeDB" id="Q2RRV2"/>
<dbReference type="Proteomes" id="UP000001929">
    <property type="component" value="Chromosome"/>
</dbReference>
<dbReference type="GO" id="GO:0051539">
    <property type="term" value="F:4 iron, 4 sulfur cluster binding"/>
    <property type="evidence" value="ECO:0000250"/>
    <property type="project" value="UniProtKB"/>
</dbReference>
<dbReference type="GO" id="GO:0030145">
    <property type="term" value="F:manganese ion binding"/>
    <property type="evidence" value="ECO:0000250"/>
    <property type="project" value="UniProtKB"/>
</dbReference>
<dbReference type="GO" id="GO:0045145">
    <property type="term" value="F:single-stranded DNA 5'-3' DNA exonuclease activity"/>
    <property type="evidence" value="ECO:0000250"/>
    <property type="project" value="UniProtKB"/>
</dbReference>
<dbReference type="GO" id="GO:0051607">
    <property type="term" value="P:defense response to virus"/>
    <property type="evidence" value="ECO:0007669"/>
    <property type="project" value="UniProtKB-KW"/>
</dbReference>
<dbReference type="GO" id="GO:0006308">
    <property type="term" value="P:DNA catabolic process"/>
    <property type="evidence" value="ECO:0000250"/>
    <property type="project" value="UniProtKB"/>
</dbReference>
<dbReference type="FunFam" id="3.90.320.10:FF:000050">
    <property type="entry name" value="CRISPR-associated exonuclease Cas4"/>
    <property type="match status" value="1"/>
</dbReference>
<dbReference type="Gene3D" id="3.90.320.10">
    <property type="match status" value="1"/>
</dbReference>
<dbReference type="InterPro" id="IPR051827">
    <property type="entry name" value="Cas4_exonuclease"/>
</dbReference>
<dbReference type="InterPro" id="IPR013343">
    <property type="entry name" value="CRISPR-assoc_prot_Cas4"/>
</dbReference>
<dbReference type="InterPro" id="IPR022765">
    <property type="entry name" value="Dna2/Cas4_DUF83"/>
</dbReference>
<dbReference type="InterPro" id="IPR011604">
    <property type="entry name" value="PDDEXK-like_dom_sf"/>
</dbReference>
<dbReference type="NCBIfam" id="TIGR00372">
    <property type="entry name" value="cas4"/>
    <property type="match status" value="1"/>
</dbReference>
<dbReference type="PANTHER" id="PTHR36531">
    <property type="entry name" value="CRISPR-ASSOCIATED EXONUCLEASE CAS4"/>
    <property type="match status" value="1"/>
</dbReference>
<dbReference type="PANTHER" id="PTHR36531:SF6">
    <property type="entry name" value="DNA REPLICATION ATP-DEPENDENT HELICASE_NUCLEASE DNA2"/>
    <property type="match status" value="1"/>
</dbReference>
<dbReference type="Pfam" id="PF01930">
    <property type="entry name" value="Cas_Cas4"/>
    <property type="match status" value="1"/>
</dbReference>
<name>CAS4_RHORT</name>
<evidence type="ECO:0000250" key="1">
    <source>
        <dbReference type="UniProtKB" id="Q97TX9"/>
    </source>
</evidence>
<evidence type="ECO:0000305" key="2"/>
<organism>
    <name type="scientific">Rhodospirillum rubrum (strain ATCC 11170 / ATH 1.1.1 / DSM 467 / LMG 4362 / NCIMB 8255 / S1)</name>
    <dbReference type="NCBI Taxonomy" id="269796"/>
    <lineage>
        <taxon>Bacteria</taxon>
        <taxon>Pseudomonadati</taxon>
        <taxon>Pseudomonadota</taxon>
        <taxon>Alphaproteobacteria</taxon>
        <taxon>Rhodospirillales</taxon>
        <taxon>Rhodospirillaceae</taxon>
        <taxon>Rhodospirillum</taxon>
    </lineage>
</organism>
<sequence>MAPSDTPPSAEDLPSQGELALFAPPATAEDALVPASMVNAWIYCPRLAVLEWGRGEKARSVDLIAGLRAHQATESGPTPALPDPMVLREDQSLKTRKLSLSSERLGLTAELDLLDVEEGVVIPVEIKVGKRPSVDEGAYLPERAQVCAQALLLREAGYTCLEGALWFAESRERVTVDLTEALVTATLVATSDLRLTVASGRLPPPLDHSAKCPRCSLLPICLPDEIAWFRKGSIARTPPPPASPALPLYGQTPGARIGKKDRGGSVCLDRMAAWLSSRPVPCYAAIGMLNTASGASHPSVARHADGGASARSFRLPTAFRRPVRRSLPCYAAR</sequence>
<feature type="chain" id="PRO_0000417891" description="CRISPR-associated exonuclease Cas4">
    <location>
        <begin position="1"/>
        <end position="333"/>
    </location>
</feature>
<feature type="binding site" evidence="1">
    <location>
        <position position="44"/>
    </location>
    <ligand>
        <name>[4Fe-4S] cluster</name>
        <dbReference type="ChEBI" id="CHEBI:49883"/>
    </ligand>
</feature>
<feature type="binding site" evidence="1">
    <location>
        <position position="70"/>
    </location>
    <ligand>
        <name>Mn(2+)</name>
        <dbReference type="ChEBI" id="CHEBI:29035"/>
    </ligand>
</feature>
<feature type="binding site" evidence="1">
    <location>
        <position position="112"/>
    </location>
    <ligand>
        <name>Mn(2+)</name>
        <dbReference type="ChEBI" id="CHEBI:29035"/>
    </ligand>
</feature>
<feature type="binding site" evidence="1">
    <location>
        <position position="125"/>
    </location>
    <ligand>
        <name>Mn(2+)</name>
        <dbReference type="ChEBI" id="CHEBI:29035"/>
    </ligand>
</feature>
<feature type="binding site" evidence="1">
    <location>
        <position position="126"/>
    </location>
    <ligand>
        <name>Mn(2+)</name>
        <dbReference type="ChEBI" id="CHEBI:29035"/>
    </ligand>
</feature>
<feature type="binding site" evidence="1">
    <location>
        <position position="212"/>
    </location>
    <ligand>
        <name>[4Fe-4S] cluster</name>
        <dbReference type="ChEBI" id="CHEBI:49883"/>
    </ligand>
</feature>
<feature type="binding site" evidence="1">
    <location>
        <position position="215"/>
    </location>
    <ligand>
        <name>[4Fe-4S] cluster</name>
        <dbReference type="ChEBI" id="CHEBI:49883"/>
    </ligand>
</feature>
<feature type="binding site" evidence="1">
    <location>
        <position position="221"/>
    </location>
    <ligand>
        <name>[4Fe-4S] cluster</name>
        <dbReference type="ChEBI" id="CHEBI:49883"/>
    </ligand>
</feature>
<reference key="1">
    <citation type="journal article" date="2011" name="Stand. Genomic Sci.">
        <title>Complete genome sequence of Rhodospirillum rubrum type strain (S1).</title>
        <authorList>
            <person name="Munk A.C."/>
            <person name="Copeland A."/>
            <person name="Lucas S."/>
            <person name="Lapidus A."/>
            <person name="Del Rio T.G."/>
            <person name="Barry K."/>
            <person name="Detter J.C."/>
            <person name="Hammon N."/>
            <person name="Israni S."/>
            <person name="Pitluck S."/>
            <person name="Brettin T."/>
            <person name="Bruce D."/>
            <person name="Han C."/>
            <person name="Tapia R."/>
            <person name="Gilna P."/>
            <person name="Schmutz J."/>
            <person name="Larimer F."/>
            <person name="Land M."/>
            <person name="Kyrpides N.C."/>
            <person name="Mavromatis K."/>
            <person name="Richardson P."/>
            <person name="Rohde M."/>
            <person name="Goeker M."/>
            <person name="Klenk H.P."/>
            <person name="Zhang Y."/>
            <person name="Roberts G.P."/>
            <person name="Reslewic S."/>
            <person name="Schwartz D.C."/>
        </authorList>
    </citation>
    <scope>NUCLEOTIDE SEQUENCE [LARGE SCALE GENOMIC DNA]</scope>
    <source>
        <strain>ATCC 11170 / ATH 1.1.1 / DSM 467 / LMG 4362 / NCIMB 8255 / S1</strain>
    </source>
</reference>
<keyword id="KW-0004">4Fe-4S</keyword>
<keyword id="KW-0051">Antiviral defense</keyword>
<keyword id="KW-0269">Exonuclease</keyword>
<keyword id="KW-0378">Hydrolase</keyword>
<keyword id="KW-0408">Iron</keyword>
<keyword id="KW-0411">Iron-sulfur</keyword>
<keyword id="KW-0464">Manganese</keyword>
<keyword id="KW-0479">Metal-binding</keyword>
<keyword id="KW-0540">Nuclease</keyword>
<keyword id="KW-1185">Reference proteome</keyword>
<accession>Q2RRV2</accession>
<protein>
    <recommendedName>
        <fullName>CRISPR-associated exonuclease Cas4</fullName>
        <ecNumber evidence="1">3.1.12.1</ecNumber>
    </recommendedName>
</protein>
<gene>
    <name type="primary">cas4</name>
    <name type="ordered locus">Rru_A2343</name>
</gene>